<sequence>MGAHLARRYLGDASVEPDPLRMPTFPPDYGFPERKEREMVATQQEMNDAQLVLQQRDYCAHYLIRFLKCKRDSFPNFLACKHERHDWDYCEHLDYVKRMKEFERERRLLQRKKRREQREADMAKGLGPGEVAPEVAL</sequence>
<gene>
    <name type="primary">NDUFB7</name>
</gene>
<organism>
    <name type="scientific">Bos taurus</name>
    <name type="common">Bovine</name>
    <dbReference type="NCBI Taxonomy" id="9913"/>
    <lineage>
        <taxon>Eukaryota</taxon>
        <taxon>Metazoa</taxon>
        <taxon>Chordata</taxon>
        <taxon>Craniata</taxon>
        <taxon>Vertebrata</taxon>
        <taxon>Euteleostomi</taxon>
        <taxon>Mammalia</taxon>
        <taxon>Eutheria</taxon>
        <taxon>Laurasiatheria</taxon>
        <taxon>Artiodactyla</taxon>
        <taxon>Ruminantia</taxon>
        <taxon>Pecora</taxon>
        <taxon>Bovidae</taxon>
        <taxon>Bovinae</taxon>
        <taxon>Bos</taxon>
    </lineage>
</organism>
<evidence type="ECO:0000250" key="1">
    <source>
        <dbReference type="UniProtKB" id="P17568"/>
    </source>
</evidence>
<evidence type="ECO:0000250" key="2">
    <source>
        <dbReference type="UniProtKB" id="Q9CR61"/>
    </source>
</evidence>
<evidence type="ECO:0000255" key="3">
    <source>
        <dbReference type="PROSITE-ProRule" id="PRU01150"/>
    </source>
</evidence>
<evidence type="ECO:0000256" key="4">
    <source>
        <dbReference type="SAM" id="MobiDB-lite"/>
    </source>
</evidence>
<evidence type="ECO:0000269" key="5">
    <source>
    </source>
</evidence>
<evidence type="ECO:0000269" key="6">
    <source>
    </source>
</evidence>
<evidence type="ECO:0000269" key="7">
    <source>
    </source>
</evidence>
<evidence type="ECO:0000305" key="8"/>
<evidence type="ECO:0000305" key="9">
    <source>
    </source>
</evidence>
<evidence type="ECO:0000305" key="10">
    <source>
    </source>
</evidence>
<evidence type="ECO:0007829" key="11">
    <source>
        <dbReference type="PDB" id="7QSM"/>
    </source>
</evidence>
<evidence type="ECO:0007829" key="12">
    <source>
        <dbReference type="PDB" id="8Q1Y"/>
    </source>
</evidence>
<evidence type="ECO:0007829" key="13">
    <source>
        <dbReference type="PDB" id="8Q49"/>
    </source>
</evidence>
<feature type="initiator methionine" description="Removed">
    <location>
        <position position="1"/>
    </location>
</feature>
<feature type="chain" id="PRO_0000118810" description="NADH dehydrogenase [ubiquinone] 1 beta subcomplex subunit 7">
    <location>
        <begin position="2"/>
        <end position="137"/>
    </location>
</feature>
<feature type="domain" description="CHCH" evidence="3">
    <location>
        <begin position="56"/>
        <end position="98"/>
    </location>
</feature>
<feature type="region of interest" description="Disordered" evidence="4">
    <location>
        <begin position="110"/>
        <end position="137"/>
    </location>
</feature>
<feature type="short sequence motif" description="Cx9C motif 1" evidence="3">
    <location>
        <begin position="59"/>
        <end position="69"/>
    </location>
</feature>
<feature type="short sequence motif" description="Cx9C motif 2" evidence="3">
    <location>
        <begin position="80"/>
        <end position="90"/>
    </location>
</feature>
<feature type="modified residue" description="Phosphoserine" evidence="2">
    <location>
        <position position="73"/>
    </location>
</feature>
<feature type="lipid moiety-binding region" description="N-myristoyl glycine" evidence="6">
    <location>
        <position position="2"/>
    </location>
</feature>
<feature type="disulfide bond" evidence="3">
    <location>
        <begin position="59"/>
        <end position="90"/>
    </location>
</feature>
<feature type="disulfide bond" evidence="3">
    <location>
        <begin position="69"/>
        <end position="80"/>
    </location>
</feature>
<feature type="helix" evidence="11">
    <location>
        <begin position="3"/>
        <end position="9"/>
    </location>
</feature>
<feature type="helix" evidence="11">
    <location>
        <begin position="13"/>
        <end position="15"/>
    </location>
</feature>
<feature type="turn" evidence="11">
    <location>
        <begin position="19"/>
        <end position="21"/>
    </location>
</feature>
<feature type="turn" evidence="11">
    <location>
        <begin position="27"/>
        <end position="30"/>
    </location>
</feature>
<feature type="strand" evidence="12">
    <location>
        <begin position="31"/>
        <end position="33"/>
    </location>
</feature>
<feature type="helix" evidence="11">
    <location>
        <begin position="43"/>
        <end position="49"/>
    </location>
</feature>
<feature type="helix" evidence="11">
    <location>
        <begin position="53"/>
        <end position="55"/>
    </location>
</feature>
<feature type="helix" evidence="11">
    <location>
        <begin position="60"/>
        <end position="73"/>
    </location>
</feature>
<feature type="turn" evidence="13">
    <location>
        <begin position="77"/>
        <end position="80"/>
    </location>
</feature>
<feature type="helix" evidence="11">
    <location>
        <begin position="81"/>
        <end position="121"/>
    </location>
</feature>
<name>NDUB7_BOVIN</name>
<keyword id="KW-0002">3D-structure</keyword>
<keyword id="KW-0903">Direct protein sequencing</keyword>
<keyword id="KW-1015">Disulfide bond</keyword>
<keyword id="KW-0249">Electron transport</keyword>
<keyword id="KW-0449">Lipoprotein</keyword>
<keyword id="KW-0472">Membrane</keyword>
<keyword id="KW-0496">Mitochondrion</keyword>
<keyword id="KW-0999">Mitochondrion inner membrane</keyword>
<keyword id="KW-0519">Myristate</keyword>
<keyword id="KW-0597">Phosphoprotein</keyword>
<keyword id="KW-1185">Reference proteome</keyword>
<keyword id="KW-0679">Respiratory chain</keyword>
<keyword id="KW-0813">Transport</keyword>
<protein>
    <recommendedName>
        <fullName>NADH dehydrogenase [ubiquinone] 1 beta subcomplex subunit 7</fullName>
    </recommendedName>
    <alternativeName>
        <fullName>Complex I-B18</fullName>
        <shortName>CI-B18</shortName>
    </alternativeName>
    <alternativeName>
        <fullName>NADH-ubiquinone oxidoreductase B18 subunit</fullName>
    </alternativeName>
</protein>
<accession>Q02368</accession>
<accession>Q3T0A1</accession>
<dbReference type="EMBL" id="X63210">
    <property type="protein sequence ID" value="CAA44895.1"/>
    <property type="molecule type" value="mRNA"/>
</dbReference>
<dbReference type="EMBL" id="BC102482">
    <property type="protein sequence ID" value="AAI02483.1"/>
    <property type="molecule type" value="mRNA"/>
</dbReference>
<dbReference type="PIR" id="S28247">
    <property type="entry name" value="S28247"/>
</dbReference>
<dbReference type="RefSeq" id="NP_788833.1">
    <property type="nucleotide sequence ID" value="NM_176660.2"/>
</dbReference>
<dbReference type="PDB" id="5LC5">
    <property type="method" value="EM"/>
    <property type="resolution" value="4.35 A"/>
    <property type="chains" value="o=58-115"/>
</dbReference>
<dbReference type="PDB" id="5LDW">
    <property type="method" value="EM"/>
    <property type="resolution" value="4.27 A"/>
    <property type="chains" value="o=2-137"/>
</dbReference>
<dbReference type="PDB" id="5LDX">
    <property type="method" value="EM"/>
    <property type="resolution" value="5.60 A"/>
    <property type="chains" value="o=58-115"/>
</dbReference>
<dbReference type="PDB" id="5O31">
    <property type="method" value="EM"/>
    <property type="resolution" value="4.13 A"/>
    <property type="chains" value="o=2-137"/>
</dbReference>
<dbReference type="PDB" id="7DGQ">
    <property type="method" value="EM"/>
    <property type="resolution" value="5.00 A"/>
    <property type="chains" value="d=2-118"/>
</dbReference>
<dbReference type="PDB" id="7DGR">
    <property type="method" value="EM"/>
    <property type="resolution" value="4.60 A"/>
    <property type="chains" value="d=2-118"/>
</dbReference>
<dbReference type="PDB" id="7DGS">
    <property type="method" value="EM"/>
    <property type="resolution" value="7.80 A"/>
    <property type="chains" value="d=2-118"/>
</dbReference>
<dbReference type="PDB" id="7DGZ">
    <property type="method" value="EM"/>
    <property type="resolution" value="3.80 A"/>
    <property type="chains" value="d=2-137"/>
</dbReference>
<dbReference type="PDB" id="7DH0">
    <property type="method" value="EM"/>
    <property type="resolution" value="4.20 A"/>
    <property type="chains" value="d=2-137"/>
</dbReference>
<dbReference type="PDB" id="7DKF">
    <property type="method" value="EM"/>
    <property type="resolution" value="8.30 A"/>
    <property type="chains" value="d2=2-137"/>
</dbReference>
<dbReference type="PDB" id="7QSD">
    <property type="method" value="EM"/>
    <property type="resolution" value="3.10 A"/>
    <property type="chains" value="o=1-137"/>
</dbReference>
<dbReference type="PDB" id="7QSK">
    <property type="method" value="EM"/>
    <property type="resolution" value="2.84 A"/>
    <property type="chains" value="o=1-137"/>
</dbReference>
<dbReference type="PDB" id="7QSL">
    <property type="method" value="EM"/>
    <property type="resolution" value="2.76 A"/>
    <property type="chains" value="o=1-137"/>
</dbReference>
<dbReference type="PDB" id="7QSM">
    <property type="method" value="EM"/>
    <property type="resolution" value="2.30 A"/>
    <property type="chains" value="o=1-137"/>
</dbReference>
<dbReference type="PDB" id="7QSN">
    <property type="method" value="EM"/>
    <property type="resolution" value="2.81 A"/>
    <property type="chains" value="o=1-137"/>
</dbReference>
<dbReference type="PDB" id="7QSO">
    <property type="method" value="EM"/>
    <property type="resolution" value="3.02 A"/>
    <property type="chains" value="o=1-137"/>
</dbReference>
<dbReference type="PDB" id="7R41">
    <property type="method" value="EM"/>
    <property type="resolution" value="2.30 A"/>
    <property type="chains" value="o=1-137"/>
</dbReference>
<dbReference type="PDB" id="7R42">
    <property type="method" value="EM"/>
    <property type="resolution" value="2.30 A"/>
    <property type="chains" value="o=1-137"/>
</dbReference>
<dbReference type="PDB" id="7R43">
    <property type="method" value="EM"/>
    <property type="resolution" value="2.40 A"/>
    <property type="chains" value="o=1-137"/>
</dbReference>
<dbReference type="PDB" id="7R44">
    <property type="method" value="EM"/>
    <property type="resolution" value="2.40 A"/>
    <property type="chains" value="o=1-137"/>
</dbReference>
<dbReference type="PDB" id="7R45">
    <property type="method" value="EM"/>
    <property type="resolution" value="2.40 A"/>
    <property type="chains" value="o=1-137"/>
</dbReference>
<dbReference type="PDB" id="7R46">
    <property type="method" value="EM"/>
    <property type="resolution" value="2.40 A"/>
    <property type="chains" value="o=1-137"/>
</dbReference>
<dbReference type="PDB" id="7R47">
    <property type="method" value="EM"/>
    <property type="resolution" value="2.30 A"/>
    <property type="chains" value="o=1-137"/>
</dbReference>
<dbReference type="PDB" id="7R48">
    <property type="method" value="EM"/>
    <property type="resolution" value="2.30 A"/>
    <property type="chains" value="o=2-137"/>
</dbReference>
<dbReference type="PDB" id="7R4C">
    <property type="method" value="EM"/>
    <property type="resolution" value="2.30 A"/>
    <property type="chains" value="o=1-137"/>
</dbReference>
<dbReference type="PDB" id="7R4D">
    <property type="method" value="EM"/>
    <property type="resolution" value="2.30 A"/>
    <property type="chains" value="o=1-137"/>
</dbReference>
<dbReference type="PDB" id="7R4F">
    <property type="method" value="EM"/>
    <property type="resolution" value="2.40 A"/>
    <property type="chains" value="o=1-137"/>
</dbReference>
<dbReference type="PDB" id="7R4G">
    <property type="method" value="EM"/>
    <property type="resolution" value="2.50 A"/>
    <property type="chains" value="o=1-137"/>
</dbReference>
<dbReference type="PDB" id="8Q0A">
    <property type="method" value="EM"/>
    <property type="resolution" value="3.10 A"/>
    <property type="chains" value="o=1-137"/>
</dbReference>
<dbReference type="PDB" id="8Q0F">
    <property type="method" value="EM"/>
    <property type="resolution" value="3.10 A"/>
    <property type="chains" value="o=1-137"/>
</dbReference>
<dbReference type="PDB" id="8Q0J">
    <property type="method" value="EM"/>
    <property type="resolution" value="3.80 A"/>
    <property type="chains" value="o=1-137"/>
</dbReference>
<dbReference type="PDB" id="8Q0M">
    <property type="method" value="EM"/>
    <property type="resolution" value="3.10 A"/>
    <property type="chains" value="o=1-137"/>
</dbReference>
<dbReference type="PDB" id="8Q0O">
    <property type="method" value="EM"/>
    <property type="resolution" value="3.10 A"/>
    <property type="chains" value="o=1-137"/>
</dbReference>
<dbReference type="PDB" id="8Q0Q">
    <property type="method" value="EM"/>
    <property type="resolution" value="3.60 A"/>
    <property type="chains" value="o=1-137"/>
</dbReference>
<dbReference type="PDB" id="8Q1P">
    <property type="method" value="EM"/>
    <property type="resolution" value="2.90 A"/>
    <property type="chains" value="o=1-137"/>
</dbReference>
<dbReference type="PDB" id="8Q1U">
    <property type="method" value="EM"/>
    <property type="resolution" value="3.30 A"/>
    <property type="chains" value="o=1-137"/>
</dbReference>
<dbReference type="PDB" id="8Q1Y">
    <property type="method" value="EM"/>
    <property type="resolution" value="2.60 A"/>
    <property type="chains" value="o=1-137"/>
</dbReference>
<dbReference type="PDB" id="8Q25">
    <property type="method" value="EM"/>
    <property type="resolution" value="2.80 A"/>
    <property type="chains" value="o=1-137"/>
</dbReference>
<dbReference type="PDB" id="8Q45">
    <property type="method" value="EM"/>
    <property type="resolution" value="2.70 A"/>
    <property type="chains" value="o=1-137"/>
</dbReference>
<dbReference type="PDB" id="8Q46">
    <property type="method" value="EM"/>
    <property type="resolution" value="2.60 A"/>
    <property type="chains" value="o=1-137"/>
</dbReference>
<dbReference type="PDB" id="8Q47">
    <property type="method" value="EM"/>
    <property type="resolution" value="2.90 A"/>
    <property type="chains" value="o=1-137"/>
</dbReference>
<dbReference type="PDB" id="8Q48">
    <property type="method" value="EM"/>
    <property type="resolution" value="2.50 A"/>
    <property type="chains" value="o=1-137"/>
</dbReference>
<dbReference type="PDB" id="8Q49">
    <property type="method" value="EM"/>
    <property type="resolution" value="2.60 A"/>
    <property type="chains" value="o=1-137"/>
</dbReference>
<dbReference type="PDB" id="8Q4A">
    <property type="method" value="EM"/>
    <property type="resolution" value="2.60 A"/>
    <property type="chains" value="o=1-137"/>
</dbReference>
<dbReference type="PDBsum" id="5LC5"/>
<dbReference type="PDBsum" id="5LDW"/>
<dbReference type="PDBsum" id="5LDX"/>
<dbReference type="PDBsum" id="5O31"/>
<dbReference type="PDBsum" id="7DGQ"/>
<dbReference type="PDBsum" id="7DGR"/>
<dbReference type="PDBsum" id="7DGS"/>
<dbReference type="PDBsum" id="7DGZ"/>
<dbReference type="PDBsum" id="7DH0"/>
<dbReference type="PDBsum" id="7DKF"/>
<dbReference type="PDBsum" id="7QSD"/>
<dbReference type="PDBsum" id="7QSK"/>
<dbReference type="PDBsum" id="7QSL"/>
<dbReference type="PDBsum" id="7QSM"/>
<dbReference type="PDBsum" id="7QSN"/>
<dbReference type="PDBsum" id="7QSO"/>
<dbReference type="PDBsum" id="7R41"/>
<dbReference type="PDBsum" id="7R42"/>
<dbReference type="PDBsum" id="7R43"/>
<dbReference type="PDBsum" id="7R44"/>
<dbReference type="PDBsum" id="7R45"/>
<dbReference type="PDBsum" id="7R46"/>
<dbReference type="PDBsum" id="7R47"/>
<dbReference type="PDBsum" id="7R48"/>
<dbReference type="PDBsum" id="7R4C"/>
<dbReference type="PDBsum" id="7R4D"/>
<dbReference type="PDBsum" id="7R4F"/>
<dbReference type="PDBsum" id="7R4G"/>
<dbReference type="PDBsum" id="8Q0A"/>
<dbReference type="PDBsum" id="8Q0F"/>
<dbReference type="PDBsum" id="8Q0J"/>
<dbReference type="PDBsum" id="8Q0M"/>
<dbReference type="PDBsum" id="8Q0O"/>
<dbReference type="PDBsum" id="8Q0Q"/>
<dbReference type="PDBsum" id="8Q1P"/>
<dbReference type="PDBsum" id="8Q1U"/>
<dbReference type="PDBsum" id="8Q1Y"/>
<dbReference type="PDBsum" id="8Q25"/>
<dbReference type="PDBsum" id="8Q45"/>
<dbReference type="PDBsum" id="8Q46"/>
<dbReference type="PDBsum" id="8Q47"/>
<dbReference type="PDBsum" id="8Q48"/>
<dbReference type="PDBsum" id="8Q49"/>
<dbReference type="PDBsum" id="8Q4A"/>
<dbReference type="EMDB" id="EMD-14127"/>
<dbReference type="EMDB" id="EMD-14132"/>
<dbReference type="EMDB" id="EMD-14133"/>
<dbReference type="EMDB" id="EMD-14134"/>
<dbReference type="EMDB" id="EMD-14139"/>
<dbReference type="EMDB" id="EMD-14140"/>
<dbReference type="EMDB" id="EMD-14251"/>
<dbReference type="EMDB" id="EMD-14256"/>
<dbReference type="EMDB" id="EMD-14261"/>
<dbReference type="EMDB" id="EMD-14266"/>
<dbReference type="EMDB" id="EMD-14272"/>
<dbReference type="EMDB" id="EMD-14277"/>
<dbReference type="EMDB" id="EMD-14282"/>
<dbReference type="EMDB" id="EMD-14287"/>
<dbReference type="EMDB" id="EMD-14292"/>
<dbReference type="EMDB" id="EMD-14297"/>
<dbReference type="EMDB" id="EMD-14302"/>
<dbReference type="EMDB" id="EMD-14307"/>
<dbReference type="EMDB" id="EMD-18051"/>
<dbReference type="EMDB" id="EMD-18052"/>
<dbReference type="EMDB" id="EMD-18054"/>
<dbReference type="EMDB" id="EMD-18055"/>
<dbReference type="EMDB" id="EMD-18057"/>
<dbReference type="EMDB" id="EMD-18059"/>
<dbReference type="EMDB" id="EMD-18066"/>
<dbReference type="EMDB" id="EMD-18067"/>
<dbReference type="EMDB" id="EMD-18068"/>
<dbReference type="EMDB" id="EMD-18069"/>
<dbReference type="EMDB" id="EMD-18138"/>
<dbReference type="EMDB" id="EMD-18139"/>
<dbReference type="EMDB" id="EMD-18140"/>
<dbReference type="EMDB" id="EMD-18141"/>
<dbReference type="EMDB" id="EMD-18142"/>
<dbReference type="EMDB" id="EMD-18143"/>
<dbReference type="EMDB" id="EMD-30673"/>
<dbReference type="EMDB" id="EMD-30674"/>
<dbReference type="EMDB" id="EMD-30675"/>
<dbReference type="EMDB" id="EMD-30676"/>
<dbReference type="EMDB" id="EMD-30677"/>
<dbReference type="EMDB" id="EMD-30706"/>
<dbReference type="EMDB" id="EMD-3731"/>
<dbReference type="EMDB" id="EMD-4032"/>
<dbReference type="EMDB" id="EMD-4040"/>
<dbReference type="EMDB" id="EMD-4041"/>
<dbReference type="SMR" id="Q02368"/>
<dbReference type="CORUM" id="Q02368"/>
<dbReference type="DIP" id="DIP-38797N"/>
<dbReference type="FunCoup" id="Q02368">
    <property type="interactions" value="2914"/>
</dbReference>
<dbReference type="IntAct" id="Q02368">
    <property type="interactions" value="1"/>
</dbReference>
<dbReference type="STRING" id="9913.ENSBTAP00000016768"/>
<dbReference type="TCDB" id="3.D.1.6.1">
    <property type="family name" value="the h+ or na+-translocating nadh dehydrogenase (ndh) family"/>
</dbReference>
<dbReference type="GlyGen" id="Q02368">
    <property type="glycosylation" value="1 site, 1 O-linked glycan (1 site)"/>
</dbReference>
<dbReference type="iPTMnet" id="Q02368"/>
<dbReference type="PaxDb" id="9913-ENSBTAP00000016768"/>
<dbReference type="Ensembl" id="ENSBTAT00000016768.5">
    <property type="protein sequence ID" value="ENSBTAP00000016768.3"/>
    <property type="gene ID" value="ENSBTAG00000012634.5"/>
</dbReference>
<dbReference type="GeneID" id="338065"/>
<dbReference type="KEGG" id="bta:338065"/>
<dbReference type="CTD" id="4713"/>
<dbReference type="VEuPathDB" id="HostDB:ENSBTAG00000012634"/>
<dbReference type="VGNC" id="VGNC:31966">
    <property type="gene designation" value="NDUFB7"/>
</dbReference>
<dbReference type="eggNOG" id="KOG3468">
    <property type="taxonomic scope" value="Eukaryota"/>
</dbReference>
<dbReference type="GeneTree" id="ENSGT00390000018759"/>
<dbReference type="HOGENOM" id="CLU_154847_1_0_1"/>
<dbReference type="InParanoid" id="Q02368"/>
<dbReference type="OMA" id="FVYQCAH"/>
<dbReference type="OrthoDB" id="268414at2759"/>
<dbReference type="TreeFam" id="TF315152"/>
<dbReference type="Reactome" id="R-BTA-611105">
    <property type="pathway name" value="Respiratory electron transport"/>
</dbReference>
<dbReference type="Reactome" id="R-BTA-6799198">
    <property type="pathway name" value="Complex I biogenesis"/>
</dbReference>
<dbReference type="Proteomes" id="UP000009136">
    <property type="component" value="Chromosome 7"/>
</dbReference>
<dbReference type="Bgee" id="ENSBTAG00000012634">
    <property type="expression patterns" value="Expressed in laryngeal cartilage and 105 other cell types or tissues"/>
</dbReference>
<dbReference type="GO" id="GO:0005743">
    <property type="term" value="C:mitochondrial inner membrane"/>
    <property type="evidence" value="ECO:0007669"/>
    <property type="project" value="UniProtKB-SubCell"/>
</dbReference>
<dbReference type="GO" id="GO:0005758">
    <property type="term" value="C:mitochondrial intermembrane space"/>
    <property type="evidence" value="ECO:0007669"/>
    <property type="project" value="UniProtKB-SubCell"/>
</dbReference>
<dbReference type="GO" id="GO:0005739">
    <property type="term" value="C:mitochondrion"/>
    <property type="evidence" value="ECO:0000305"/>
    <property type="project" value="UniProtKB"/>
</dbReference>
<dbReference type="GO" id="GO:0045271">
    <property type="term" value="C:respiratory chain complex I"/>
    <property type="evidence" value="ECO:0000314"/>
    <property type="project" value="UniProtKB"/>
</dbReference>
<dbReference type="GO" id="GO:0008137">
    <property type="term" value="F:NADH dehydrogenase (ubiquinone) activity"/>
    <property type="evidence" value="ECO:0007669"/>
    <property type="project" value="Ensembl"/>
</dbReference>
<dbReference type="InterPro" id="IPR008698">
    <property type="entry name" value="NDUB7"/>
</dbReference>
<dbReference type="PANTHER" id="PTHR20900:SF0">
    <property type="entry name" value="NADH DEHYDROGENASE [UBIQUINONE] 1 BETA SUBCOMPLEX SUBUNIT 7"/>
    <property type="match status" value="1"/>
</dbReference>
<dbReference type="PANTHER" id="PTHR20900">
    <property type="entry name" value="NADH:UBIQUINONE OXIDOREDUCTASE B18-LIKE SUBUNIT"/>
    <property type="match status" value="1"/>
</dbReference>
<dbReference type="Pfam" id="PF05676">
    <property type="entry name" value="NDUF_B7"/>
    <property type="match status" value="1"/>
</dbReference>
<dbReference type="PROSITE" id="PS51808">
    <property type="entry name" value="CHCH"/>
    <property type="match status" value="1"/>
</dbReference>
<proteinExistence type="evidence at protein level"/>
<comment type="function">
    <text evidence="1">Accessory subunit of the mitochondrial membrane respiratory chain NADH dehydrogenase (Complex I), that is believed not to be involved in catalysis. Complex I functions in the transfer of electrons from NADH to the respiratory chain. The immediate electron acceptor for the enzyme is believed to be ubiquinone.</text>
</comment>
<comment type="subunit">
    <text evidence="5 6 7">Complex I is composed of 45 different subunits.</text>
</comment>
<comment type="subcellular location">
    <subcellularLocation>
        <location evidence="9 10">Mitochondrion inner membrane</location>
        <topology evidence="8">Peripheral membrane protein</topology>
    </subcellularLocation>
    <subcellularLocation>
        <location evidence="8">Mitochondrion intermembrane space</location>
    </subcellularLocation>
</comment>
<comment type="domain">
    <text evidence="1">Contains two C-X9-C motifs that are predicted to form a helix-coil-helix structure, permitting the formation of intramolecular disulfide bonds.</text>
</comment>
<comment type="similarity">
    <text evidence="8">Belongs to the complex I NDUFB7 subunit family.</text>
</comment>
<reference key="1">
    <citation type="journal article" date="1992" name="J. Mol. Biol.">
        <title>Sequences of 20 subunits of NADH:ubiquinone oxidoreductase from bovine heart mitochondria. Application of a novel strategy for sequencing proteins using the polymerase chain reaction.</title>
        <authorList>
            <person name="Walker J.E."/>
            <person name="Arizmendi J.M."/>
            <person name="Dupuis A."/>
            <person name="Fearnley I.M."/>
            <person name="Finel M."/>
            <person name="Medd S.M."/>
            <person name="Pilkington S.J."/>
            <person name="Runswick M.J."/>
            <person name="Skehel J.M."/>
        </authorList>
    </citation>
    <scope>NUCLEOTIDE SEQUENCE [MRNA]</scope>
    <scope>MYRISTOYLATION AT GLY-2</scope>
    <scope>PARTIAL PROTEIN SEQUENCE</scope>
    <source>
        <tissue>Heart</tissue>
    </source>
</reference>
<reference key="2">
    <citation type="submission" date="2005-08" db="EMBL/GenBank/DDBJ databases">
        <authorList>
            <consortium name="NIH - Mammalian Gene Collection (MGC) project"/>
        </authorList>
    </citation>
    <scope>NUCLEOTIDE SEQUENCE [LARGE SCALE MRNA]</scope>
    <source>
        <strain>Crossbred X Angus</strain>
        <tissue>Ileum</tissue>
    </source>
</reference>
<reference key="3">
    <citation type="journal article" date="2000" name="Biochemistry">
        <title>Resolution of the membrane domain of bovine complex I into subcomplexes: implications for the structural organization of the enzyme.</title>
        <authorList>
            <person name="Sazanov L.A."/>
            <person name="Peak-Chew S.Y."/>
            <person name="Fearnley I.M."/>
            <person name="Walker J.E."/>
        </authorList>
    </citation>
    <scope>PARTIAL PROTEIN SEQUENCE</scope>
    <scope>SUBUNIT</scope>
    <scope>IDENTIFICATION IN COMPLEX I</scope>
    <scope>SUBCELLULAR LOCATION</scope>
</reference>
<reference key="4">
    <citation type="journal article" date="2008" name="Anal. Biochem.">
        <title>Subunit analysis of bovine heart complex I by reversed-phase high-performance liquid chromatography, electrospray ionization-tandem mass spectrometry, and matrix-assisted laser desorption/ionization-time-of-flight mass spectrometry.</title>
        <authorList>
            <person name="Lemma-Gray P."/>
            <person name="Valusova E."/>
            <person name="Carroll C.A."/>
            <person name="Weintraub S.T."/>
            <person name="Musatov A."/>
            <person name="Robinson N.C."/>
        </authorList>
    </citation>
    <scope>SUBUNIT</scope>
    <scope>IDENTIFICATION IN COMPLEX I</scope>
    <scope>SUBCELLULAR LOCATION</scope>
</reference>